<dbReference type="EC" id="2.4.2.2"/>
<dbReference type="EMBL" id="AP006716">
    <property type="protein sequence ID" value="BAE04207.1"/>
    <property type="molecule type" value="Genomic_DNA"/>
</dbReference>
<dbReference type="RefSeq" id="WP_011275209.1">
    <property type="nucleotide sequence ID" value="NC_007168.1"/>
</dbReference>
<dbReference type="SMR" id="Q4L818"/>
<dbReference type="KEGG" id="sha:SH0898"/>
<dbReference type="eggNOG" id="COG0213">
    <property type="taxonomic scope" value="Bacteria"/>
</dbReference>
<dbReference type="HOGENOM" id="CLU_025040_0_1_9"/>
<dbReference type="OrthoDB" id="9763887at2"/>
<dbReference type="Proteomes" id="UP000000543">
    <property type="component" value="Chromosome"/>
</dbReference>
<dbReference type="GO" id="GO:0005829">
    <property type="term" value="C:cytosol"/>
    <property type="evidence" value="ECO:0007669"/>
    <property type="project" value="TreeGrafter"/>
</dbReference>
<dbReference type="GO" id="GO:0004645">
    <property type="term" value="F:1,4-alpha-oligoglucan phosphorylase activity"/>
    <property type="evidence" value="ECO:0007669"/>
    <property type="project" value="InterPro"/>
</dbReference>
<dbReference type="GO" id="GO:0047847">
    <property type="term" value="F:deoxyuridine phosphorylase activity"/>
    <property type="evidence" value="ECO:0007669"/>
    <property type="project" value="RHEA"/>
</dbReference>
<dbReference type="GO" id="GO:0046872">
    <property type="term" value="F:metal ion binding"/>
    <property type="evidence" value="ECO:0007669"/>
    <property type="project" value="UniProtKB-KW"/>
</dbReference>
<dbReference type="GO" id="GO:0009032">
    <property type="term" value="F:thymidine phosphorylase activity"/>
    <property type="evidence" value="ECO:0007669"/>
    <property type="project" value="TreeGrafter"/>
</dbReference>
<dbReference type="GO" id="GO:0004850">
    <property type="term" value="F:uridine phosphorylase activity"/>
    <property type="evidence" value="ECO:0007669"/>
    <property type="project" value="RHEA"/>
</dbReference>
<dbReference type="GO" id="GO:0006206">
    <property type="term" value="P:pyrimidine nucleobase metabolic process"/>
    <property type="evidence" value="ECO:0007669"/>
    <property type="project" value="InterPro"/>
</dbReference>
<dbReference type="GO" id="GO:0006213">
    <property type="term" value="P:pyrimidine nucleoside metabolic process"/>
    <property type="evidence" value="ECO:0007669"/>
    <property type="project" value="InterPro"/>
</dbReference>
<dbReference type="FunFam" id="1.20.970.10:FF:000002">
    <property type="entry name" value="Pyrimidine-nucleoside phosphorylase"/>
    <property type="match status" value="1"/>
</dbReference>
<dbReference type="FunFam" id="3.40.1030.10:FF:000003">
    <property type="entry name" value="Pyrimidine-nucleoside phosphorylase"/>
    <property type="match status" value="1"/>
</dbReference>
<dbReference type="Gene3D" id="3.40.1030.10">
    <property type="entry name" value="Nucleoside phosphorylase/phosphoribosyltransferase catalytic domain"/>
    <property type="match status" value="1"/>
</dbReference>
<dbReference type="Gene3D" id="3.90.1170.30">
    <property type="entry name" value="Pyrimidine nucleoside phosphorylase-like, C-terminal domain"/>
    <property type="match status" value="1"/>
</dbReference>
<dbReference type="Gene3D" id="1.20.970.10">
    <property type="entry name" value="Transferase, Pyrimidine Nucleoside Phosphorylase, Chain C"/>
    <property type="match status" value="1"/>
</dbReference>
<dbReference type="InterPro" id="IPR000312">
    <property type="entry name" value="Glycosyl_Trfase_fam3"/>
</dbReference>
<dbReference type="InterPro" id="IPR017459">
    <property type="entry name" value="Glycosyl_Trfase_fam3_N_dom"/>
</dbReference>
<dbReference type="InterPro" id="IPR036320">
    <property type="entry name" value="Glycosyl_Trfase_fam3_N_dom_sf"/>
</dbReference>
<dbReference type="InterPro" id="IPR035902">
    <property type="entry name" value="Nuc_phospho_transferase"/>
</dbReference>
<dbReference type="InterPro" id="IPR036566">
    <property type="entry name" value="PYNP-like_C_sf"/>
</dbReference>
<dbReference type="InterPro" id="IPR013102">
    <property type="entry name" value="PYNP_C"/>
</dbReference>
<dbReference type="InterPro" id="IPR018090">
    <property type="entry name" value="Pyrmidine_PPas_bac/euk"/>
</dbReference>
<dbReference type="InterPro" id="IPR017872">
    <property type="entry name" value="Pyrmidine_PPase_CS"/>
</dbReference>
<dbReference type="InterPro" id="IPR000053">
    <property type="entry name" value="Thymidine/pyrmidine_PPase"/>
</dbReference>
<dbReference type="NCBIfam" id="NF004490">
    <property type="entry name" value="PRK05820.1"/>
    <property type="match status" value="1"/>
</dbReference>
<dbReference type="NCBIfam" id="NF004747">
    <property type="entry name" value="PRK06078.1"/>
    <property type="match status" value="1"/>
</dbReference>
<dbReference type="NCBIfam" id="TIGR02644">
    <property type="entry name" value="Y_phosphoryl"/>
    <property type="match status" value="1"/>
</dbReference>
<dbReference type="PANTHER" id="PTHR10515">
    <property type="entry name" value="THYMIDINE PHOSPHORYLASE"/>
    <property type="match status" value="1"/>
</dbReference>
<dbReference type="PANTHER" id="PTHR10515:SF0">
    <property type="entry name" value="THYMIDINE PHOSPHORYLASE"/>
    <property type="match status" value="1"/>
</dbReference>
<dbReference type="Pfam" id="PF02885">
    <property type="entry name" value="Glycos_trans_3N"/>
    <property type="match status" value="1"/>
</dbReference>
<dbReference type="Pfam" id="PF00591">
    <property type="entry name" value="Glycos_transf_3"/>
    <property type="match status" value="1"/>
</dbReference>
<dbReference type="Pfam" id="PF07831">
    <property type="entry name" value="PYNP_C"/>
    <property type="match status" value="1"/>
</dbReference>
<dbReference type="PIRSF" id="PIRSF000478">
    <property type="entry name" value="TP_PyNP"/>
    <property type="match status" value="1"/>
</dbReference>
<dbReference type="SMART" id="SM00941">
    <property type="entry name" value="PYNP_C"/>
    <property type="match status" value="1"/>
</dbReference>
<dbReference type="SUPFAM" id="SSF52418">
    <property type="entry name" value="Nucleoside phosphorylase/phosphoribosyltransferase catalytic domain"/>
    <property type="match status" value="1"/>
</dbReference>
<dbReference type="SUPFAM" id="SSF47648">
    <property type="entry name" value="Nucleoside phosphorylase/phosphoribosyltransferase N-terminal domain"/>
    <property type="match status" value="1"/>
</dbReference>
<dbReference type="SUPFAM" id="SSF54680">
    <property type="entry name" value="Pyrimidine nucleoside phosphorylase C-terminal domain"/>
    <property type="match status" value="1"/>
</dbReference>
<dbReference type="PROSITE" id="PS00647">
    <property type="entry name" value="THYMID_PHOSPHORYLASE"/>
    <property type="match status" value="1"/>
</dbReference>
<protein>
    <recommendedName>
        <fullName>Pyrimidine-nucleoside phosphorylase</fullName>
        <shortName>PYNP</shortName>
        <shortName>Py-NPase</shortName>
        <ecNumber>2.4.2.2</ecNumber>
    </recommendedName>
</protein>
<organism>
    <name type="scientific">Staphylococcus haemolyticus (strain JCSC1435)</name>
    <dbReference type="NCBI Taxonomy" id="279808"/>
    <lineage>
        <taxon>Bacteria</taxon>
        <taxon>Bacillati</taxon>
        <taxon>Bacillota</taxon>
        <taxon>Bacilli</taxon>
        <taxon>Bacillales</taxon>
        <taxon>Staphylococcaceae</taxon>
        <taxon>Staphylococcus</taxon>
    </lineage>
</organism>
<name>PDP_STAHJ</name>
<sequence length="433" mass="46177">MRMVDIIEKKRDGKSLSKEEIEFFIKGYTNGDIPDYQASSLAMAIFFQDMNDEERAALTMAMVNSGDVIDLSKINGIKVDKHSTGGVGDTTTLVLAPLVAAVGVPVAKMSGRGLGHTGGTIDKLESIKGFHVEISEEDFIKLVNENQVAVIGQSGNLTPADKKLYALRDVTGTVNSIPLIASSIMSKKIAAGADAIVLDVKTGNGAFMKTLEDAEALAHAMVSIGNNVGRNTMAIISDMSQPLGRAIGNALELKEAIDTLNGKGPEDLTELVLTLGSQMVVLANRANTLEEARQLLNEAIENGSALEKFKTFLENQGGDVSVVDAPELLPTATYQIEYKAQSSGVVSELIANEIGVASMMLGAGRQTKEDEIDLSVGIVLNKKVGDVVKEGESLLTIHSNRENVDDVIKKLDESIEIQAQATTPTLIHKIITE</sequence>
<comment type="function">
    <text evidence="1">Catalyzes phosphorolysis of the pyrimidine nucleosides uridine, thymidine and 2'-deoxyuridine with the formation of the corresponding pyrimidine base and ribose-1-phosphate.</text>
</comment>
<comment type="catalytic activity">
    <reaction evidence="1">
        <text>uridine + phosphate = alpha-D-ribose 1-phosphate + uracil</text>
        <dbReference type="Rhea" id="RHEA:24388"/>
        <dbReference type="ChEBI" id="CHEBI:16704"/>
        <dbReference type="ChEBI" id="CHEBI:17568"/>
        <dbReference type="ChEBI" id="CHEBI:43474"/>
        <dbReference type="ChEBI" id="CHEBI:57720"/>
        <dbReference type="EC" id="2.4.2.2"/>
    </reaction>
</comment>
<comment type="catalytic activity">
    <reaction evidence="1">
        <text>thymidine + phosphate = 2-deoxy-alpha-D-ribose 1-phosphate + thymine</text>
        <dbReference type="Rhea" id="RHEA:16037"/>
        <dbReference type="ChEBI" id="CHEBI:17748"/>
        <dbReference type="ChEBI" id="CHEBI:17821"/>
        <dbReference type="ChEBI" id="CHEBI:43474"/>
        <dbReference type="ChEBI" id="CHEBI:57259"/>
        <dbReference type="EC" id="2.4.2.2"/>
    </reaction>
</comment>
<comment type="catalytic activity">
    <reaction evidence="1">
        <text>2'-deoxyuridine + phosphate = 2-deoxy-alpha-D-ribose 1-phosphate + uracil</text>
        <dbReference type="Rhea" id="RHEA:22824"/>
        <dbReference type="ChEBI" id="CHEBI:16450"/>
        <dbReference type="ChEBI" id="CHEBI:17568"/>
        <dbReference type="ChEBI" id="CHEBI:43474"/>
        <dbReference type="ChEBI" id="CHEBI:57259"/>
        <dbReference type="EC" id="2.4.2.2"/>
    </reaction>
</comment>
<comment type="cofactor">
    <cofactor evidence="1">
        <name>K(+)</name>
        <dbReference type="ChEBI" id="CHEBI:29103"/>
    </cofactor>
    <text evidence="1">Binds 1 K(+) ion per subunit.</text>
</comment>
<comment type="subunit">
    <text evidence="1">Homodimer.</text>
</comment>
<comment type="similarity">
    <text evidence="2">Belongs to the thymidine/pyrimidine-nucleoside phosphorylase family.</text>
</comment>
<gene>
    <name type="primary">pdp</name>
    <name type="synonym">pyn</name>
    <name type="ordered locus">SH0898</name>
</gene>
<proteinExistence type="inferred from homology"/>
<feature type="chain" id="PRO_0000269541" description="Pyrimidine-nucleoside phosphorylase">
    <location>
        <begin position="1"/>
        <end position="433"/>
    </location>
</feature>
<feature type="binding site" evidence="1">
    <location>
        <begin position="81"/>
        <end position="83"/>
    </location>
    <ligand>
        <name>phosphate</name>
        <dbReference type="ChEBI" id="CHEBI:43474"/>
    </ligand>
</feature>
<feature type="binding site" evidence="1">
    <location>
        <position position="88"/>
    </location>
    <ligand>
        <name>K(+)</name>
        <dbReference type="ChEBI" id="CHEBI:29103"/>
    </ligand>
</feature>
<feature type="binding site" evidence="1">
    <location>
        <position position="90"/>
    </location>
    <ligand>
        <name>K(+)</name>
        <dbReference type="ChEBI" id="CHEBI:29103"/>
    </ligand>
</feature>
<feature type="binding site" evidence="1">
    <location>
        <position position="92"/>
    </location>
    <ligand>
        <name>phosphate</name>
        <dbReference type="ChEBI" id="CHEBI:43474"/>
    </ligand>
</feature>
<feature type="binding site" evidence="1">
    <location>
        <begin position="108"/>
        <end position="110"/>
    </location>
    <ligand>
        <name>phosphate</name>
        <dbReference type="ChEBI" id="CHEBI:43474"/>
    </ligand>
</feature>
<feature type="binding site" evidence="1">
    <location>
        <position position="120"/>
    </location>
    <ligand>
        <name>phosphate</name>
        <dbReference type="ChEBI" id="CHEBI:43474"/>
    </ligand>
</feature>
<feature type="binding site" evidence="1">
    <location>
        <position position="168"/>
    </location>
    <ligand>
        <name>substrate</name>
    </ligand>
</feature>
<feature type="binding site" evidence="1">
    <location>
        <position position="187"/>
    </location>
    <ligand>
        <name>substrate</name>
    </ligand>
</feature>
<feature type="binding site" evidence="1">
    <location>
        <position position="243"/>
    </location>
    <ligand>
        <name>K(+)</name>
        <dbReference type="ChEBI" id="CHEBI:29103"/>
    </ligand>
</feature>
<feature type="binding site" evidence="1">
    <location>
        <position position="246"/>
    </location>
    <ligand>
        <name>K(+)</name>
        <dbReference type="ChEBI" id="CHEBI:29103"/>
    </ligand>
</feature>
<feature type="binding site" evidence="1">
    <location>
        <position position="255"/>
    </location>
    <ligand>
        <name>K(+)</name>
        <dbReference type="ChEBI" id="CHEBI:29103"/>
    </ligand>
</feature>
<keyword id="KW-0328">Glycosyltransferase</keyword>
<keyword id="KW-0479">Metal-binding</keyword>
<keyword id="KW-0630">Potassium</keyword>
<keyword id="KW-0808">Transferase</keyword>
<reference key="1">
    <citation type="journal article" date="2005" name="J. Bacteriol.">
        <title>Whole-genome sequencing of Staphylococcus haemolyticus uncovers the extreme plasticity of its genome and the evolution of human-colonizing staphylococcal species.</title>
        <authorList>
            <person name="Takeuchi F."/>
            <person name="Watanabe S."/>
            <person name="Baba T."/>
            <person name="Yuzawa H."/>
            <person name="Ito T."/>
            <person name="Morimoto Y."/>
            <person name="Kuroda M."/>
            <person name="Cui L."/>
            <person name="Takahashi M."/>
            <person name="Ankai A."/>
            <person name="Baba S."/>
            <person name="Fukui S."/>
            <person name="Lee J.C."/>
            <person name="Hiramatsu K."/>
        </authorList>
    </citation>
    <scope>NUCLEOTIDE SEQUENCE [LARGE SCALE GENOMIC DNA]</scope>
    <source>
        <strain>JCSC1435</strain>
    </source>
</reference>
<evidence type="ECO:0000250" key="1">
    <source>
        <dbReference type="UniProtKB" id="P77836"/>
    </source>
</evidence>
<evidence type="ECO:0000305" key="2"/>
<accession>Q4L818</accession>